<proteinExistence type="evidence at transcript level"/>
<feature type="chain" id="PRO_0000149187" description="Proliferating cell nuclear antigen">
    <location>
        <begin position="1" status="less than"/>
        <end position="236"/>
    </location>
</feature>
<feature type="DNA-binding region" evidence="1">
    <location>
        <begin position="31"/>
        <end position="50"/>
    </location>
</feature>
<feature type="non-terminal residue">
    <location>
        <position position="1"/>
    </location>
</feature>
<organism>
    <name type="scientific">Glycine max</name>
    <name type="common">Soybean</name>
    <name type="synonym">Glycine hispida</name>
    <dbReference type="NCBI Taxonomy" id="3847"/>
    <lineage>
        <taxon>Eukaryota</taxon>
        <taxon>Viridiplantae</taxon>
        <taxon>Streptophyta</taxon>
        <taxon>Embryophyta</taxon>
        <taxon>Tracheophyta</taxon>
        <taxon>Spermatophyta</taxon>
        <taxon>Magnoliopsida</taxon>
        <taxon>eudicotyledons</taxon>
        <taxon>Gunneridae</taxon>
        <taxon>Pentapetalae</taxon>
        <taxon>rosids</taxon>
        <taxon>fabids</taxon>
        <taxon>Fabales</taxon>
        <taxon>Fabaceae</taxon>
        <taxon>Papilionoideae</taxon>
        <taxon>50 kb inversion clade</taxon>
        <taxon>NPAAA clade</taxon>
        <taxon>indigoferoid/millettioid clade</taxon>
        <taxon>Phaseoleae</taxon>
        <taxon>Glycine</taxon>
        <taxon>Glycine subgen. Soja</taxon>
    </lineage>
</organism>
<sequence>SSTGFSLQAMDSSHVALVALLLRSEGFEHYRCDRNISMGMNLNNMAKMLKCAGNDDIITIKADDGSDTVTFMFESPTQDKISDFEMKLMDIDSEHLGIPEAEYHAIVKMPSSEFARICKDLSSIGDTVVISVTKEGVKFSTKGDIGTANIVCRQNTSVDKPEEATVIEMNEPVSLTFALRYMNSFTKATPLSNTVTISLSNELPVVVEYKIAEMGYVRFYLAPKIEEDEEDTKPQV</sequence>
<evidence type="ECO:0000255" key="1"/>
<evidence type="ECO:0000305" key="2"/>
<keyword id="KW-0235">DNA replication</keyword>
<keyword id="KW-0238">DNA-binding</keyword>
<keyword id="KW-0539">Nucleus</keyword>
<keyword id="KW-1185">Reference proteome</keyword>
<protein>
    <recommendedName>
        <fullName>Proliferating cell nuclear antigen</fullName>
        <shortName>PCNA</shortName>
    </recommendedName>
    <alternativeName>
        <fullName>Cyclin</fullName>
    </alternativeName>
</protein>
<name>PCNA_SOYBN</name>
<dbReference type="EMBL" id="X55706">
    <property type="protein sequence ID" value="CAA39239.1"/>
    <property type="molecule type" value="mRNA"/>
</dbReference>
<dbReference type="PIR" id="S14414">
    <property type="entry name" value="S14414"/>
</dbReference>
<dbReference type="SMR" id="P22177"/>
<dbReference type="STRING" id="3847.P22177"/>
<dbReference type="PaxDb" id="3847-GLYMA08G45120.2"/>
<dbReference type="eggNOG" id="KOG1636">
    <property type="taxonomic scope" value="Eukaryota"/>
</dbReference>
<dbReference type="InParanoid" id="P22177"/>
<dbReference type="Proteomes" id="UP000008827">
    <property type="component" value="Unplaced"/>
</dbReference>
<dbReference type="GO" id="GO:0043626">
    <property type="term" value="C:PCNA complex"/>
    <property type="evidence" value="ECO:0000318"/>
    <property type="project" value="GO_Central"/>
</dbReference>
<dbReference type="GO" id="GO:0003677">
    <property type="term" value="F:DNA binding"/>
    <property type="evidence" value="ECO:0007669"/>
    <property type="project" value="UniProtKB-KW"/>
</dbReference>
<dbReference type="GO" id="GO:0030337">
    <property type="term" value="F:DNA polymerase processivity factor activity"/>
    <property type="evidence" value="ECO:0000318"/>
    <property type="project" value="GO_Central"/>
</dbReference>
<dbReference type="GO" id="GO:0006272">
    <property type="term" value="P:leading strand elongation"/>
    <property type="evidence" value="ECO:0000318"/>
    <property type="project" value="GO_Central"/>
</dbReference>
<dbReference type="GO" id="GO:0006298">
    <property type="term" value="P:mismatch repair"/>
    <property type="evidence" value="ECO:0000318"/>
    <property type="project" value="GO_Central"/>
</dbReference>
<dbReference type="GO" id="GO:0006275">
    <property type="term" value="P:regulation of DNA replication"/>
    <property type="evidence" value="ECO:0007669"/>
    <property type="project" value="InterPro"/>
</dbReference>
<dbReference type="GO" id="GO:0019985">
    <property type="term" value="P:translesion synthesis"/>
    <property type="evidence" value="ECO:0000318"/>
    <property type="project" value="GO_Central"/>
</dbReference>
<dbReference type="CDD" id="cd00577">
    <property type="entry name" value="PCNA"/>
    <property type="match status" value="1"/>
</dbReference>
<dbReference type="FunFam" id="3.10.150.10:FF:000006">
    <property type="entry name" value="Proliferating cell nuclear antigen"/>
    <property type="match status" value="1"/>
</dbReference>
<dbReference type="FunFam" id="3.70.10.10:FF:000001">
    <property type="entry name" value="Proliferating cell nuclear antigen"/>
    <property type="match status" value="1"/>
</dbReference>
<dbReference type="Gene3D" id="3.70.10.10">
    <property type="match status" value="1"/>
</dbReference>
<dbReference type="InterPro" id="IPR046938">
    <property type="entry name" value="DNA_clamp_sf"/>
</dbReference>
<dbReference type="InterPro" id="IPR000730">
    <property type="entry name" value="Pr_cel_nuc_antig"/>
</dbReference>
<dbReference type="InterPro" id="IPR022649">
    <property type="entry name" value="Pr_cel_nuc_antig_C"/>
</dbReference>
<dbReference type="InterPro" id="IPR022659">
    <property type="entry name" value="Pr_cel_nuc_antig_CS"/>
</dbReference>
<dbReference type="InterPro" id="IPR022648">
    <property type="entry name" value="Pr_cel_nuc_antig_N"/>
</dbReference>
<dbReference type="NCBIfam" id="TIGR00590">
    <property type="entry name" value="pcna"/>
    <property type="match status" value="1"/>
</dbReference>
<dbReference type="PANTHER" id="PTHR11352">
    <property type="entry name" value="PROLIFERATING CELL NUCLEAR ANTIGEN"/>
    <property type="match status" value="1"/>
</dbReference>
<dbReference type="PANTHER" id="PTHR11352:SF0">
    <property type="entry name" value="PROLIFERATING CELL NUCLEAR ANTIGEN"/>
    <property type="match status" value="1"/>
</dbReference>
<dbReference type="Pfam" id="PF02747">
    <property type="entry name" value="PCNA_C"/>
    <property type="match status" value="1"/>
</dbReference>
<dbReference type="Pfam" id="PF00705">
    <property type="entry name" value="PCNA_N"/>
    <property type="match status" value="1"/>
</dbReference>
<dbReference type="PRINTS" id="PR00339">
    <property type="entry name" value="PCNACYCLIN"/>
</dbReference>
<dbReference type="SUPFAM" id="SSF55979">
    <property type="entry name" value="DNA clamp"/>
    <property type="match status" value="2"/>
</dbReference>
<dbReference type="PROSITE" id="PS01251">
    <property type="entry name" value="PCNA_1"/>
    <property type="match status" value="1"/>
</dbReference>
<dbReference type="PROSITE" id="PS00293">
    <property type="entry name" value="PCNA_2"/>
    <property type="match status" value="1"/>
</dbReference>
<accession>P22177</accession>
<comment type="function">
    <text>This protein is an auxiliary protein of DNA polymerase delta and is involved in the control of eukaryotic DNA replication by increasing the polymerase's processibility during elongation of the leading strand.</text>
</comment>
<comment type="subcellular location">
    <subcellularLocation>
        <location>Nucleus</location>
    </subcellularLocation>
</comment>
<comment type="similarity">
    <text evidence="2">Belongs to the PCNA family.</text>
</comment>
<reference key="1">
    <citation type="journal article" date="1991" name="Eur. J. Biochem.">
        <title>Highly conserved structure of proliferating cell nuclear antigen (DNA polymerase delta auxiliary protein) gene in plants.</title>
        <authorList>
            <person name="Suzuka I."/>
            <person name="Hata S."/>
            <person name="Matsuoka M."/>
            <person name="Kosugi S."/>
            <person name="Hashimoto J."/>
        </authorList>
    </citation>
    <scope>NUCLEOTIDE SEQUENCE [MRNA]</scope>
</reference>